<sequence length="477" mass="52785">MTPTNVKTRFAPSPTGRMHLGNLRTALFNALLARSRGGRFLLRLEDTDESRSSGAHAQTLMADLRWMGLHWDEGPEAGGEAGPYHQSERGAVYERYYRALEAADQAYPCFCTERELELSRKAQRAAGKPPRYAGTCAHLTAEERERRRAEGRRPTLRFRVPAEETVVFHDLVRGEQRFPTDEIGDFIIRRADGTAAFFFCNAVDDALMGVSHVLRGEDHLTNTPRQLLLLRALDLPQPEYGHINLITGDDGAPLSKRNGSLSVAELREAGWLPEAVLNYLARLGHHYTGEVESQLLDLQGLADAFRTDALGRAPARFDRHQLSHWQQLAVHRADEATLAPWLERLDDAVPADRRRALLAAVRDNILFPDDLAAWGQRVFGPLPALAPDTEAVIRDAGPAFYEAALAELETTAGDFPALAKAVRKATGAKGRQLFMPLRAALTGLCRGPELGPVYALMPVDIARCRLEQARELAATTP</sequence>
<evidence type="ECO:0000255" key="1">
    <source>
        <dbReference type="HAMAP-Rule" id="MF_00022"/>
    </source>
</evidence>
<reference key="1">
    <citation type="submission" date="2006-08" db="EMBL/GenBank/DDBJ databases">
        <title>Complete sequence of Alkalilimnicola ehrilichei MLHE-1.</title>
        <authorList>
            <person name="Copeland A."/>
            <person name="Lucas S."/>
            <person name="Lapidus A."/>
            <person name="Barry K."/>
            <person name="Detter J.C."/>
            <person name="Glavina del Rio T."/>
            <person name="Hammon N."/>
            <person name="Israni S."/>
            <person name="Dalin E."/>
            <person name="Tice H."/>
            <person name="Pitluck S."/>
            <person name="Sims D."/>
            <person name="Brettin T."/>
            <person name="Bruce D."/>
            <person name="Han C."/>
            <person name="Tapia R."/>
            <person name="Gilna P."/>
            <person name="Schmutz J."/>
            <person name="Larimer F."/>
            <person name="Land M."/>
            <person name="Hauser L."/>
            <person name="Kyrpides N."/>
            <person name="Mikhailova N."/>
            <person name="Oremland R.S."/>
            <person name="Hoeft S.E."/>
            <person name="Switzer-Blum J."/>
            <person name="Kulp T."/>
            <person name="King G."/>
            <person name="Tabita R."/>
            <person name="Witte B."/>
            <person name="Santini J.M."/>
            <person name="Basu P."/>
            <person name="Hollibaugh J.T."/>
            <person name="Xie G."/>
            <person name="Stolz J.F."/>
            <person name="Richardson P."/>
        </authorList>
    </citation>
    <scope>NUCLEOTIDE SEQUENCE [LARGE SCALE GENOMIC DNA]</scope>
    <source>
        <strain>ATCC BAA-1101 / DSM 17681 / MLHE-1</strain>
    </source>
</reference>
<organism>
    <name type="scientific">Alkalilimnicola ehrlichii (strain ATCC BAA-1101 / DSM 17681 / MLHE-1)</name>
    <dbReference type="NCBI Taxonomy" id="187272"/>
    <lineage>
        <taxon>Bacteria</taxon>
        <taxon>Pseudomonadati</taxon>
        <taxon>Pseudomonadota</taxon>
        <taxon>Gammaproteobacteria</taxon>
        <taxon>Chromatiales</taxon>
        <taxon>Ectothiorhodospiraceae</taxon>
        <taxon>Alkalilimnicola</taxon>
    </lineage>
</organism>
<gene>
    <name evidence="1" type="primary">gltX2</name>
    <name type="ordered locus">Mlg_1811</name>
</gene>
<protein>
    <recommendedName>
        <fullName evidence="1">Glutamate--tRNA ligase 2</fullName>
        <ecNumber evidence="1">6.1.1.17</ecNumber>
    </recommendedName>
    <alternativeName>
        <fullName evidence="1">Glutamyl-tRNA synthetase 2</fullName>
        <shortName evidence="1">GluRS 2</shortName>
    </alternativeName>
</protein>
<keyword id="KW-0030">Aminoacyl-tRNA synthetase</keyword>
<keyword id="KW-0067">ATP-binding</keyword>
<keyword id="KW-0963">Cytoplasm</keyword>
<keyword id="KW-0436">Ligase</keyword>
<keyword id="KW-0479">Metal-binding</keyword>
<keyword id="KW-0547">Nucleotide-binding</keyword>
<keyword id="KW-0648">Protein biosynthesis</keyword>
<keyword id="KW-1185">Reference proteome</keyword>
<keyword id="KW-0862">Zinc</keyword>
<proteinExistence type="inferred from homology"/>
<accession>Q0A7N2</accession>
<feature type="chain" id="PRO_0000367606" description="Glutamate--tRNA ligase 2">
    <location>
        <begin position="1"/>
        <end position="477"/>
    </location>
</feature>
<feature type="short sequence motif" description="'HIGH' region" evidence="1">
    <location>
        <begin position="12"/>
        <end position="22"/>
    </location>
</feature>
<feature type="short sequence motif" description="'KMSKS' region" evidence="1">
    <location>
        <begin position="253"/>
        <end position="257"/>
    </location>
</feature>
<feature type="binding site" evidence="1">
    <location>
        <position position="109"/>
    </location>
    <ligand>
        <name>Zn(2+)</name>
        <dbReference type="ChEBI" id="CHEBI:29105"/>
    </ligand>
</feature>
<feature type="binding site" evidence="1">
    <location>
        <position position="111"/>
    </location>
    <ligand>
        <name>Zn(2+)</name>
        <dbReference type="ChEBI" id="CHEBI:29105"/>
    </ligand>
</feature>
<feature type="binding site" evidence="1">
    <location>
        <position position="136"/>
    </location>
    <ligand>
        <name>Zn(2+)</name>
        <dbReference type="ChEBI" id="CHEBI:29105"/>
    </ligand>
</feature>
<feature type="binding site" evidence="1">
    <location>
        <position position="138"/>
    </location>
    <ligand>
        <name>Zn(2+)</name>
        <dbReference type="ChEBI" id="CHEBI:29105"/>
    </ligand>
</feature>
<feature type="binding site" evidence="1">
    <location>
        <position position="256"/>
    </location>
    <ligand>
        <name>ATP</name>
        <dbReference type="ChEBI" id="CHEBI:30616"/>
    </ligand>
</feature>
<comment type="function">
    <text evidence="1">Catalyzes the attachment of glutamate to tRNA(Glu) in a two-step reaction: glutamate is first activated by ATP to form Glu-AMP and then transferred to the acceptor end of tRNA(Glu).</text>
</comment>
<comment type="catalytic activity">
    <reaction evidence="1">
        <text>tRNA(Glu) + L-glutamate + ATP = L-glutamyl-tRNA(Glu) + AMP + diphosphate</text>
        <dbReference type="Rhea" id="RHEA:23540"/>
        <dbReference type="Rhea" id="RHEA-COMP:9663"/>
        <dbReference type="Rhea" id="RHEA-COMP:9680"/>
        <dbReference type="ChEBI" id="CHEBI:29985"/>
        <dbReference type="ChEBI" id="CHEBI:30616"/>
        <dbReference type="ChEBI" id="CHEBI:33019"/>
        <dbReference type="ChEBI" id="CHEBI:78442"/>
        <dbReference type="ChEBI" id="CHEBI:78520"/>
        <dbReference type="ChEBI" id="CHEBI:456215"/>
        <dbReference type="EC" id="6.1.1.17"/>
    </reaction>
</comment>
<comment type="cofactor">
    <cofactor evidence="1">
        <name>Zn(2+)</name>
        <dbReference type="ChEBI" id="CHEBI:29105"/>
    </cofactor>
    <text evidence="1">Binds 1 zinc ion per subunit.</text>
</comment>
<comment type="subunit">
    <text evidence="1">Monomer.</text>
</comment>
<comment type="subcellular location">
    <subcellularLocation>
        <location evidence="1">Cytoplasm</location>
    </subcellularLocation>
</comment>
<comment type="similarity">
    <text evidence="1">Belongs to the class-I aminoacyl-tRNA synthetase family. Glutamate--tRNA ligase type 1 subfamily.</text>
</comment>
<name>SYE2_ALKEH</name>
<dbReference type="EC" id="6.1.1.17" evidence="1"/>
<dbReference type="EMBL" id="CP000453">
    <property type="protein sequence ID" value="ABI57155.1"/>
    <property type="molecule type" value="Genomic_DNA"/>
</dbReference>
<dbReference type="RefSeq" id="WP_011629549.1">
    <property type="nucleotide sequence ID" value="NC_008340.1"/>
</dbReference>
<dbReference type="SMR" id="Q0A7N2"/>
<dbReference type="KEGG" id="aeh:Mlg_1811"/>
<dbReference type="eggNOG" id="COG0008">
    <property type="taxonomic scope" value="Bacteria"/>
</dbReference>
<dbReference type="HOGENOM" id="CLU_015768_6_1_6"/>
<dbReference type="OrthoDB" id="9807503at2"/>
<dbReference type="Proteomes" id="UP000001962">
    <property type="component" value="Chromosome"/>
</dbReference>
<dbReference type="GO" id="GO:0005829">
    <property type="term" value="C:cytosol"/>
    <property type="evidence" value="ECO:0007669"/>
    <property type="project" value="TreeGrafter"/>
</dbReference>
<dbReference type="GO" id="GO:0005524">
    <property type="term" value="F:ATP binding"/>
    <property type="evidence" value="ECO:0007669"/>
    <property type="project" value="UniProtKB-UniRule"/>
</dbReference>
<dbReference type="GO" id="GO:0004818">
    <property type="term" value="F:glutamate-tRNA ligase activity"/>
    <property type="evidence" value="ECO:0007669"/>
    <property type="project" value="UniProtKB-UniRule"/>
</dbReference>
<dbReference type="GO" id="GO:0000049">
    <property type="term" value="F:tRNA binding"/>
    <property type="evidence" value="ECO:0007669"/>
    <property type="project" value="InterPro"/>
</dbReference>
<dbReference type="GO" id="GO:0008270">
    <property type="term" value="F:zinc ion binding"/>
    <property type="evidence" value="ECO:0007669"/>
    <property type="project" value="UniProtKB-UniRule"/>
</dbReference>
<dbReference type="GO" id="GO:0006424">
    <property type="term" value="P:glutamyl-tRNA aminoacylation"/>
    <property type="evidence" value="ECO:0007669"/>
    <property type="project" value="UniProtKB-UniRule"/>
</dbReference>
<dbReference type="Gene3D" id="1.10.10.350">
    <property type="match status" value="1"/>
</dbReference>
<dbReference type="Gene3D" id="3.40.50.620">
    <property type="entry name" value="HUPs"/>
    <property type="match status" value="1"/>
</dbReference>
<dbReference type="HAMAP" id="MF_00022">
    <property type="entry name" value="Glu_tRNA_synth_type1"/>
    <property type="match status" value="1"/>
</dbReference>
<dbReference type="InterPro" id="IPR045462">
    <property type="entry name" value="aa-tRNA-synth_I_cd-bd"/>
</dbReference>
<dbReference type="InterPro" id="IPR020751">
    <property type="entry name" value="aa-tRNA-synth_I_codon-bd_sub2"/>
</dbReference>
<dbReference type="InterPro" id="IPR001412">
    <property type="entry name" value="aa-tRNA-synth_I_CS"/>
</dbReference>
<dbReference type="InterPro" id="IPR008925">
    <property type="entry name" value="aa_tRNA-synth_I_cd-bd_sf"/>
</dbReference>
<dbReference type="InterPro" id="IPR004527">
    <property type="entry name" value="Glu-tRNA-ligase_bac/mito"/>
</dbReference>
<dbReference type="InterPro" id="IPR000924">
    <property type="entry name" value="Glu/Gln-tRNA-synth"/>
</dbReference>
<dbReference type="InterPro" id="IPR020058">
    <property type="entry name" value="Glu/Gln-tRNA-synth_Ib_cat-dom"/>
</dbReference>
<dbReference type="InterPro" id="IPR049940">
    <property type="entry name" value="GluQ/Sye"/>
</dbReference>
<dbReference type="InterPro" id="IPR014729">
    <property type="entry name" value="Rossmann-like_a/b/a_fold"/>
</dbReference>
<dbReference type="NCBIfam" id="TIGR00464">
    <property type="entry name" value="gltX_bact"/>
    <property type="match status" value="1"/>
</dbReference>
<dbReference type="NCBIfam" id="NF004315">
    <property type="entry name" value="PRK05710.1-4"/>
    <property type="match status" value="1"/>
</dbReference>
<dbReference type="PANTHER" id="PTHR43311">
    <property type="entry name" value="GLUTAMATE--TRNA LIGASE"/>
    <property type="match status" value="1"/>
</dbReference>
<dbReference type="PANTHER" id="PTHR43311:SF2">
    <property type="entry name" value="GLUTAMATE--TRNA LIGASE, MITOCHONDRIAL-RELATED"/>
    <property type="match status" value="1"/>
</dbReference>
<dbReference type="Pfam" id="PF19269">
    <property type="entry name" value="Anticodon_2"/>
    <property type="match status" value="1"/>
</dbReference>
<dbReference type="Pfam" id="PF00749">
    <property type="entry name" value="tRNA-synt_1c"/>
    <property type="match status" value="1"/>
</dbReference>
<dbReference type="PRINTS" id="PR00987">
    <property type="entry name" value="TRNASYNTHGLU"/>
</dbReference>
<dbReference type="SUPFAM" id="SSF48163">
    <property type="entry name" value="An anticodon-binding domain of class I aminoacyl-tRNA synthetases"/>
    <property type="match status" value="1"/>
</dbReference>
<dbReference type="SUPFAM" id="SSF52374">
    <property type="entry name" value="Nucleotidylyl transferase"/>
    <property type="match status" value="1"/>
</dbReference>
<dbReference type="PROSITE" id="PS00178">
    <property type="entry name" value="AA_TRNA_LIGASE_I"/>
    <property type="match status" value="1"/>
</dbReference>